<evidence type="ECO:0000255" key="1"/>
<evidence type="ECO:0000255" key="2">
    <source>
        <dbReference type="PROSITE-ProRule" id="PRU00718"/>
    </source>
</evidence>
<evidence type="ECO:0000269" key="3">
    <source>
    </source>
</evidence>
<evidence type="ECO:0000269" key="4">
    <source>
    </source>
</evidence>
<evidence type="ECO:0000269" key="5">
    <source>
    </source>
</evidence>
<evidence type="ECO:0000269" key="6">
    <source>
    </source>
</evidence>
<evidence type="ECO:0000305" key="7"/>
<evidence type="ECO:0007744" key="8">
    <source>
    </source>
</evidence>
<reference key="1">
    <citation type="journal article" date="1995" name="Genes Dev.">
        <title>The DIMINUTO gene of Arabidopsis is involved in regulating cell elongation.</title>
        <authorList>
            <person name="Takahashi T."/>
            <person name="Gasch A."/>
            <person name="Nishizawa N."/>
            <person name="Chua N.-H."/>
        </authorList>
    </citation>
    <scope>NUCLEOTIDE SEQUENCE [MRNA]</scope>
    <source>
        <strain>cv. Columbia</strain>
    </source>
</reference>
<reference key="2">
    <citation type="submission" date="1994-07" db="EMBL/GenBank/DDBJ databases">
        <title>The DWF1 locus of Arabidopsis thaliana encodes a novel protein required for cell elongation.</title>
        <authorList>
            <person name="Dilkes B.P."/>
            <person name="Wu Y."/>
            <person name="Schulz B."/>
            <person name="Carlson T."/>
            <person name="Anna W."/>
            <person name="Feldman F.A."/>
        </authorList>
    </citation>
    <scope>NUCLEOTIDE SEQUENCE [MRNA]</scope>
    <source>
        <strain>cv. Columbia</strain>
    </source>
</reference>
<reference key="3">
    <citation type="journal article" date="2000" name="DNA Res.">
        <title>Structural analysis of Arabidopsis thaliana chromosome 3. I. Sequence features of the regions of 4,504,864 bp covered by sixty P1 and TAC clones.</title>
        <authorList>
            <person name="Sato S."/>
            <person name="Nakamura Y."/>
            <person name="Kaneko T."/>
            <person name="Katoh T."/>
            <person name="Asamizu E."/>
            <person name="Tabata S."/>
        </authorList>
    </citation>
    <scope>NUCLEOTIDE SEQUENCE [LARGE SCALE GENOMIC DNA]</scope>
    <source>
        <strain>cv. Columbia</strain>
    </source>
</reference>
<reference key="4">
    <citation type="journal article" date="2017" name="Plant J.">
        <title>Araport11: a complete reannotation of the Arabidopsis thaliana reference genome.</title>
        <authorList>
            <person name="Cheng C.Y."/>
            <person name="Krishnakumar V."/>
            <person name="Chan A.P."/>
            <person name="Thibaud-Nissen F."/>
            <person name="Schobel S."/>
            <person name="Town C.D."/>
        </authorList>
    </citation>
    <scope>GENOME REANNOTATION</scope>
    <source>
        <strain>cv. Columbia</strain>
    </source>
</reference>
<reference key="5">
    <citation type="journal article" date="2003" name="Science">
        <title>Empirical analysis of transcriptional activity in the Arabidopsis genome.</title>
        <authorList>
            <person name="Yamada K."/>
            <person name="Lim J."/>
            <person name="Dale J.M."/>
            <person name="Chen H."/>
            <person name="Shinn P."/>
            <person name="Palm C.J."/>
            <person name="Southwick A.M."/>
            <person name="Wu H.C."/>
            <person name="Kim C.J."/>
            <person name="Nguyen M."/>
            <person name="Pham P.K."/>
            <person name="Cheuk R.F."/>
            <person name="Karlin-Newmann G."/>
            <person name="Liu S.X."/>
            <person name="Lam B."/>
            <person name="Sakano H."/>
            <person name="Wu T."/>
            <person name="Yu G."/>
            <person name="Miranda M."/>
            <person name="Quach H.L."/>
            <person name="Tripp M."/>
            <person name="Chang C.H."/>
            <person name="Lee J.M."/>
            <person name="Toriumi M.J."/>
            <person name="Chan M.M."/>
            <person name="Tang C.C."/>
            <person name="Onodera C.S."/>
            <person name="Deng J.M."/>
            <person name="Akiyama K."/>
            <person name="Ansari Y."/>
            <person name="Arakawa T."/>
            <person name="Banh J."/>
            <person name="Banno F."/>
            <person name="Bowser L."/>
            <person name="Brooks S.Y."/>
            <person name="Carninci P."/>
            <person name="Chao Q."/>
            <person name="Choy N."/>
            <person name="Enju A."/>
            <person name="Goldsmith A.D."/>
            <person name="Gurjal M."/>
            <person name="Hansen N.F."/>
            <person name="Hayashizaki Y."/>
            <person name="Johnson-Hopson C."/>
            <person name="Hsuan V.W."/>
            <person name="Iida K."/>
            <person name="Karnes M."/>
            <person name="Khan S."/>
            <person name="Koesema E."/>
            <person name="Ishida J."/>
            <person name="Jiang P.X."/>
            <person name="Jones T."/>
            <person name="Kawai J."/>
            <person name="Kamiya A."/>
            <person name="Meyers C."/>
            <person name="Nakajima M."/>
            <person name="Narusaka M."/>
            <person name="Seki M."/>
            <person name="Sakurai T."/>
            <person name="Satou M."/>
            <person name="Tamse R."/>
            <person name="Vaysberg M."/>
            <person name="Wallender E.K."/>
            <person name="Wong C."/>
            <person name="Yamamura Y."/>
            <person name="Yuan S."/>
            <person name="Shinozaki K."/>
            <person name="Davis R.W."/>
            <person name="Theologis A."/>
            <person name="Ecker J.R."/>
        </authorList>
    </citation>
    <scope>NUCLEOTIDE SEQUENCE [LARGE SCALE MRNA]</scope>
    <source>
        <strain>cv. Columbia</strain>
    </source>
</reference>
<reference key="6">
    <citation type="submission" date="2006-07" db="EMBL/GenBank/DDBJ databases">
        <title>Large-scale analysis of RIKEN Arabidopsis full-length (RAFL) cDNAs.</title>
        <authorList>
            <person name="Totoki Y."/>
            <person name="Seki M."/>
            <person name="Ishida J."/>
            <person name="Nakajima M."/>
            <person name="Enju A."/>
            <person name="Kamiya A."/>
            <person name="Narusaka M."/>
            <person name="Shin-i T."/>
            <person name="Nakagawa M."/>
            <person name="Sakamoto N."/>
            <person name="Oishi K."/>
            <person name="Kohara Y."/>
            <person name="Kobayashi M."/>
            <person name="Toyoda A."/>
            <person name="Sakaki Y."/>
            <person name="Sakurai T."/>
            <person name="Iida K."/>
            <person name="Akiyama K."/>
            <person name="Satou M."/>
            <person name="Toyoda T."/>
            <person name="Konagaya A."/>
            <person name="Carninci P."/>
            <person name="Kawai J."/>
            <person name="Hayashizaki Y."/>
            <person name="Shinozaki K."/>
        </authorList>
    </citation>
    <scope>NUCLEOTIDE SEQUENCE [LARGE SCALE MRNA]</scope>
    <source>
        <strain>cv. Columbia</strain>
    </source>
</reference>
<reference key="7">
    <citation type="submission" date="2009-03" db="EMBL/GenBank/DDBJ databases">
        <title>ORF cloning and analysis of Arabidopsis transcription factor genes.</title>
        <authorList>
            <person name="Fujita M."/>
            <person name="Mizukado S."/>
            <person name="Seki M."/>
            <person name="Shinozaki K."/>
            <person name="Mitsuda N."/>
            <person name="Takiguchi Y."/>
            <person name="Takagi M."/>
        </authorList>
    </citation>
    <scope>NUCLEOTIDE SEQUENCE [LARGE SCALE MRNA]</scope>
</reference>
<reference key="8">
    <citation type="journal article" date="1998" name="Plant Cell">
        <title>The Arabidopsis DIMINUTO/DWARF1 gene encodes a protein involved in steroid synthesis.</title>
        <authorList>
            <person name="Klahre U."/>
            <person name="Noguchi T."/>
            <person name="Fujioka S."/>
            <person name="Takatsuto S."/>
            <person name="Yokota T."/>
            <person name="Nomura T."/>
            <person name="Yoshida S."/>
            <person name="Chua N.H."/>
        </authorList>
    </citation>
    <scope>FUNCTION</scope>
    <scope>CATALYTIC ACTIVITY</scope>
    <scope>SUBCELLULAR LOCATION</scope>
</reference>
<reference key="9">
    <citation type="journal article" date="1999" name="Plant Physiol.">
        <title>The Arabidopsis dwarf1 mutant is defective in the conversion of 24-methylenecholesterol to campesterol in brassinosteroid biosynthesis.</title>
        <authorList>
            <person name="Choe S."/>
            <person name="Dilkes B.P."/>
            <person name="Gregory B.D."/>
            <person name="Ross A.S."/>
            <person name="Yuan H."/>
            <person name="Noguchi T."/>
            <person name="Fujioka S."/>
            <person name="Takatsuto S."/>
            <person name="Tanaka A."/>
            <person name="Yoshida S."/>
            <person name="Tax F.E."/>
            <person name="Feldmann K.A."/>
        </authorList>
    </citation>
    <scope>FUNCTION</scope>
    <scope>CATALYTIC ACTIVITY</scope>
    <scope>MUTAGENESIS OF GLU-131; GLY-163; GLY-172; GLY-220 AND GLY-282</scope>
    <scope>DISRUPTION PHENOTYPE</scope>
</reference>
<reference key="10">
    <citation type="journal article" date="2002" name="Plant Physiol.">
        <title>Brassinosteroid mutants uncover fine tuning of phytochrome signaling.</title>
        <authorList>
            <person name="Luccioni L.G."/>
            <person name="Oliverio K.A."/>
            <person name="Yanovsky M.J."/>
            <person name="Boccalandro H.E."/>
            <person name="Casal J.J."/>
        </authorList>
    </citation>
    <scope>FUNCTION</scope>
</reference>
<reference key="11">
    <citation type="journal article" date="2005" name="Nature">
        <title>Ca2+/calmodulin is critical for brassinosteroid biosynthesis and plant growth.</title>
        <authorList>
            <person name="Du L."/>
            <person name="Poovaiah B.W."/>
        </authorList>
    </citation>
    <scope>INTERACTION WITH CALMODULIN</scope>
    <scope>MUTAGENESIS OF 521-LYS--ARG-523 AND VAL-531</scope>
</reference>
<reference key="12">
    <citation type="journal article" date="2009" name="Plant Physiol.">
        <title>Large-scale Arabidopsis phosphoproteome profiling reveals novel chloroplast kinase substrates and phosphorylation networks.</title>
        <authorList>
            <person name="Reiland S."/>
            <person name="Messerli G."/>
            <person name="Baerenfaller K."/>
            <person name="Gerrits B."/>
            <person name="Endler A."/>
            <person name="Grossmann J."/>
            <person name="Gruissem W."/>
            <person name="Baginsky S."/>
        </authorList>
    </citation>
    <scope>PHOSPHORYLATION [LARGE SCALE ANALYSIS] AT SER-2</scope>
    <scope>IDENTIFICATION BY MASS SPECTROMETRY [LARGE SCALE ANALYSIS]</scope>
</reference>
<protein>
    <recommendedName>
        <fullName>Delta(24)-sterol reductase</fullName>
        <ecNumber>1.3.1.72</ecNumber>
    </recommendedName>
    <alternativeName>
        <fullName>Cell elongation protein DIMINUTO</fullName>
    </alternativeName>
    <alternativeName>
        <fullName>Cell elongation protein Dwarf1</fullName>
    </alternativeName>
    <alternativeName>
        <fullName>Protein CABBAGE1</fullName>
    </alternativeName>
    <alternativeName>
        <fullName>Protein ENHANCED VERY-LOW-FLUENCE RESPONSE 1</fullName>
    </alternativeName>
</protein>
<name>DIM_ARATH</name>
<gene>
    <name type="primary">DIM</name>
    <name type="synonym">CBB1</name>
    <name type="synonym">DWF1</name>
    <name type="synonym">EVE1</name>
    <name type="ordered locus">At3g19820</name>
    <name type="ORF">MPN9.6</name>
</gene>
<accession>Q39085</accession>
<accession>Q0WWL4</accession>
<accession>Q38808</accession>
<accession>Q8RXF4</accession>
<keyword id="KW-0112">Calmodulin-binding</keyword>
<keyword id="KW-0256">Endoplasmic reticulum</keyword>
<keyword id="KW-0472">Membrane</keyword>
<keyword id="KW-0492">Microsome</keyword>
<keyword id="KW-0521">NADP</keyword>
<keyword id="KW-0560">Oxidoreductase</keyword>
<keyword id="KW-0597">Phosphoprotein</keyword>
<keyword id="KW-1185">Reference proteome</keyword>
<keyword id="KW-0735">Signal-anchor</keyword>
<keyword id="KW-0812">Transmembrane</keyword>
<keyword id="KW-1133">Transmembrane helix</keyword>
<feature type="chain" id="PRO_0000219495" description="Delta(24)-sterol reductase">
    <location>
        <begin position="1"/>
        <end position="561"/>
    </location>
</feature>
<feature type="topological domain" description="Lumenal" evidence="1">
    <location>
        <begin position="1"/>
        <end position="25"/>
    </location>
</feature>
<feature type="transmembrane region" description="Helical; Signal-anchor" evidence="1">
    <location>
        <begin position="26"/>
        <end position="46"/>
    </location>
</feature>
<feature type="topological domain" description="Cytoplasmic" evidence="1">
    <location>
        <begin position="47"/>
        <end position="561"/>
    </location>
</feature>
<feature type="domain" description="FAD-binding PCMH-type" evidence="2">
    <location>
        <begin position="49"/>
        <end position="232"/>
    </location>
</feature>
<feature type="region of interest" description="Interaction with calmodulin">
    <location>
        <begin position="518"/>
        <end position="539"/>
    </location>
</feature>
<feature type="modified residue" description="Phosphoserine" evidence="8">
    <location>
        <position position="2"/>
    </location>
</feature>
<feature type="mutagenesis site" description="In dwf1-9; dwarf phenotype." evidence="3">
    <original>E</original>
    <variation>K</variation>
    <location>
        <position position="131"/>
    </location>
</feature>
<feature type="mutagenesis site" description="In dwf1-3; dwarf phenotype." evidence="3">
    <original>G</original>
    <variation>V</variation>
    <location>
        <position position="163"/>
    </location>
</feature>
<feature type="mutagenesis site" description="In dwf1-10; dwarf phenotype." evidence="3">
    <original>G</original>
    <variation>E</variation>
    <location>
        <position position="172"/>
    </location>
</feature>
<feature type="mutagenesis site" description="In dwf1-11; dwarf phenotype." evidence="3">
    <original>G</original>
    <variation>R</variation>
    <location>
        <position position="220"/>
    </location>
</feature>
<feature type="mutagenesis site" description="In dwf1-7; dwarf phenotype." evidence="3">
    <original>G</original>
    <variation>R</variation>
    <location>
        <position position="282"/>
    </location>
</feature>
<feature type="mutagenesis site" description="Loss of calmodulin binding and loss of function." evidence="5">
    <original>KYR</original>
    <variation>DGD</variation>
    <location>
        <begin position="521"/>
        <end position="523"/>
    </location>
</feature>
<feature type="mutagenesis site" description="Decreased calmodulin binding and partial loss of function." evidence="5">
    <original>V</original>
    <variation>D</variation>
    <location>
        <position position="531"/>
    </location>
</feature>
<feature type="sequence conflict" description="In Ref. 5; AAL91175/AAN15686." evidence="7" ref="5">
    <original>L</original>
    <variation>P</variation>
    <location>
        <position position="399"/>
    </location>
</feature>
<feature type="sequence conflict" description="In Ref. 1; AAA67055." evidence="7" ref="1">
    <original>E</original>
    <variation>G</variation>
    <location>
        <position position="450"/>
    </location>
</feature>
<feature type="sequence conflict" description="In Ref. 1; AAA67055." evidence="7" ref="1">
    <original>S</original>
    <variation>L</variation>
    <location>
        <position position="476"/>
    </location>
</feature>
<feature type="sequence conflict" description="In Ref. 1; AAA67055." evidence="7" ref="1">
    <original>F</original>
    <variation>L</variation>
    <location>
        <position position="506"/>
    </location>
</feature>
<feature type="sequence conflict" description="In Ref. 5; AAL91175/AAN15686." evidence="7" ref="5">
    <original>T</original>
    <variation>K</variation>
    <location>
        <position position="527"/>
    </location>
</feature>
<feature type="sequence conflict" description="In Ref. 1; AAA67055." evidence="7" ref="1">
    <original>AYA</original>
    <variation>PYP</variation>
    <location>
        <begin position="556"/>
        <end position="558"/>
    </location>
</feature>
<dbReference type="EC" id="1.3.1.72"/>
<dbReference type="EMBL" id="L38520">
    <property type="protein sequence ID" value="AAA67055.1"/>
    <property type="molecule type" value="mRNA"/>
</dbReference>
<dbReference type="EMBL" id="U12400">
    <property type="protein sequence ID" value="AAA20244.1"/>
    <property type="molecule type" value="mRNA"/>
</dbReference>
<dbReference type="EMBL" id="AB025631">
    <property type="protein sequence ID" value="BAB01296.1"/>
    <property type="molecule type" value="Genomic_DNA"/>
</dbReference>
<dbReference type="EMBL" id="CP002686">
    <property type="protein sequence ID" value="AEE76293.1"/>
    <property type="molecule type" value="Genomic_DNA"/>
</dbReference>
<dbReference type="EMBL" id="CP002686">
    <property type="protein sequence ID" value="AEE76294.1"/>
    <property type="molecule type" value="Genomic_DNA"/>
</dbReference>
<dbReference type="EMBL" id="CP002686">
    <property type="protein sequence ID" value="AEE76295.1"/>
    <property type="molecule type" value="Genomic_DNA"/>
</dbReference>
<dbReference type="EMBL" id="AY072216">
    <property type="protein sequence ID" value="AAL60037.1"/>
    <property type="molecule type" value="mRNA"/>
</dbReference>
<dbReference type="EMBL" id="AY081286">
    <property type="protein sequence ID" value="AAL91175.1"/>
    <property type="molecule type" value="mRNA"/>
</dbReference>
<dbReference type="EMBL" id="AY096472">
    <property type="protein sequence ID" value="AAM20112.1"/>
    <property type="molecule type" value="mRNA"/>
</dbReference>
<dbReference type="EMBL" id="BT000367">
    <property type="protein sequence ID" value="AAN15686.1"/>
    <property type="molecule type" value="mRNA"/>
</dbReference>
<dbReference type="EMBL" id="AK226335">
    <property type="protein sequence ID" value="BAE98484.1"/>
    <property type="molecule type" value="mRNA"/>
</dbReference>
<dbReference type="EMBL" id="AB493623">
    <property type="protein sequence ID" value="BAH30461.1"/>
    <property type="molecule type" value="mRNA"/>
</dbReference>
<dbReference type="PIR" id="S71189">
    <property type="entry name" value="S71189"/>
</dbReference>
<dbReference type="RefSeq" id="NP_001319595.1">
    <property type="nucleotide sequence ID" value="NM_001338420.1"/>
</dbReference>
<dbReference type="RefSeq" id="NP_188616.1">
    <property type="nucleotide sequence ID" value="NM_112872.3"/>
</dbReference>
<dbReference type="RefSeq" id="NP_850616.1">
    <property type="nucleotide sequence ID" value="NM_180285.4"/>
</dbReference>
<dbReference type="SMR" id="Q39085"/>
<dbReference type="BioGRID" id="6851">
    <property type="interactions" value="20"/>
</dbReference>
<dbReference type="FunCoup" id="Q39085">
    <property type="interactions" value="851"/>
</dbReference>
<dbReference type="IntAct" id="Q39085">
    <property type="interactions" value="10"/>
</dbReference>
<dbReference type="STRING" id="3702.Q39085"/>
<dbReference type="iPTMnet" id="Q39085"/>
<dbReference type="SwissPalm" id="Q39085"/>
<dbReference type="PaxDb" id="3702-AT3G19820.2"/>
<dbReference type="ProteomicsDB" id="224483"/>
<dbReference type="EnsemblPlants" id="AT3G19820.1">
    <property type="protein sequence ID" value="AT3G19820.1"/>
    <property type="gene ID" value="AT3G19820"/>
</dbReference>
<dbReference type="EnsemblPlants" id="AT3G19820.2">
    <property type="protein sequence ID" value="AT3G19820.2"/>
    <property type="gene ID" value="AT3G19820"/>
</dbReference>
<dbReference type="EnsemblPlants" id="AT3G19820.3">
    <property type="protein sequence ID" value="AT3G19820.3"/>
    <property type="gene ID" value="AT3G19820"/>
</dbReference>
<dbReference type="GeneID" id="821519"/>
<dbReference type="Gramene" id="AT3G19820.1">
    <property type="protein sequence ID" value="AT3G19820.1"/>
    <property type="gene ID" value="AT3G19820"/>
</dbReference>
<dbReference type="Gramene" id="AT3G19820.2">
    <property type="protein sequence ID" value="AT3G19820.2"/>
    <property type="gene ID" value="AT3G19820"/>
</dbReference>
<dbReference type="Gramene" id="AT3G19820.3">
    <property type="protein sequence ID" value="AT3G19820.3"/>
    <property type="gene ID" value="AT3G19820"/>
</dbReference>
<dbReference type="KEGG" id="ath:AT3G19820"/>
<dbReference type="Araport" id="AT3G19820"/>
<dbReference type="TAIR" id="AT3G19820">
    <property type="gene designation" value="DWF1"/>
</dbReference>
<dbReference type="eggNOG" id="KOG1262">
    <property type="taxonomic scope" value="Eukaryota"/>
</dbReference>
<dbReference type="HOGENOM" id="CLU_025883_4_0_1"/>
<dbReference type="InParanoid" id="Q39085"/>
<dbReference type="OMA" id="WVGRSAF"/>
<dbReference type="OrthoDB" id="415825at2759"/>
<dbReference type="PhylomeDB" id="Q39085"/>
<dbReference type="BioCyc" id="ARA:AT3G19820-MONOMER"/>
<dbReference type="BioCyc" id="MetaCyc:AT3G19820-MONOMER"/>
<dbReference type="BRENDA" id="1.3.1.72">
    <property type="organism ID" value="399"/>
</dbReference>
<dbReference type="PRO" id="PR:Q39085"/>
<dbReference type="Proteomes" id="UP000006548">
    <property type="component" value="Chromosome 3"/>
</dbReference>
<dbReference type="ExpressionAtlas" id="Q39085">
    <property type="expression patterns" value="baseline and differential"/>
</dbReference>
<dbReference type="GO" id="GO:0005829">
    <property type="term" value="C:cytosol"/>
    <property type="evidence" value="ECO:0007005"/>
    <property type="project" value="TAIR"/>
</dbReference>
<dbReference type="GO" id="GO:0005783">
    <property type="term" value="C:endoplasmic reticulum"/>
    <property type="evidence" value="ECO:0007669"/>
    <property type="project" value="UniProtKB-KW"/>
</dbReference>
<dbReference type="GO" id="GO:0016020">
    <property type="term" value="C:membrane"/>
    <property type="evidence" value="ECO:0007669"/>
    <property type="project" value="UniProtKB-KW"/>
</dbReference>
<dbReference type="GO" id="GO:0000325">
    <property type="term" value="C:plant-type vacuole"/>
    <property type="evidence" value="ECO:0007005"/>
    <property type="project" value="TAIR"/>
</dbReference>
<dbReference type="GO" id="GO:0005773">
    <property type="term" value="C:vacuole"/>
    <property type="evidence" value="ECO:0007005"/>
    <property type="project" value="TAIR"/>
</dbReference>
<dbReference type="GO" id="GO:0005516">
    <property type="term" value="F:calmodulin binding"/>
    <property type="evidence" value="ECO:0000314"/>
    <property type="project" value="TAIR"/>
</dbReference>
<dbReference type="GO" id="GO:0050614">
    <property type="term" value="F:Delta24-sterol reductase activity"/>
    <property type="evidence" value="ECO:0007669"/>
    <property type="project" value="UniProtKB-EC"/>
</dbReference>
<dbReference type="GO" id="GO:0071949">
    <property type="term" value="F:FAD binding"/>
    <property type="evidence" value="ECO:0007669"/>
    <property type="project" value="InterPro"/>
</dbReference>
<dbReference type="GO" id="GO:0016132">
    <property type="term" value="P:brassinosteroid biosynthetic process"/>
    <property type="evidence" value="ECO:0000314"/>
    <property type="project" value="TAIR"/>
</dbReference>
<dbReference type="GO" id="GO:0009808">
    <property type="term" value="P:lignin metabolic process"/>
    <property type="evidence" value="ECO:0000315"/>
    <property type="project" value="TAIR"/>
</dbReference>
<dbReference type="GO" id="GO:0009834">
    <property type="term" value="P:plant-type secondary cell wall biogenesis"/>
    <property type="evidence" value="ECO:0000315"/>
    <property type="project" value="TAIR"/>
</dbReference>
<dbReference type="GO" id="GO:0009826">
    <property type="term" value="P:unidimensional cell growth"/>
    <property type="evidence" value="ECO:0000315"/>
    <property type="project" value="TAIR"/>
</dbReference>
<dbReference type="FunFam" id="3.30.465.10:FF:000012">
    <property type="entry name" value="delta(24)-sterol reductase isoform X1"/>
    <property type="match status" value="1"/>
</dbReference>
<dbReference type="Gene3D" id="3.30.465.10">
    <property type="match status" value="1"/>
</dbReference>
<dbReference type="InterPro" id="IPR040165">
    <property type="entry name" value="Diminuto-like"/>
</dbReference>
<dbReference type="InterPro" id="IPR016166">
    <property type="entry name" value="FAD-bd_PCMH"/>
</dbReference>
<dbReference type="InterPro" id="IPR036318">
    <property type="entry name" value="FAD-bd_PCMH-like_sf"/>
</dbReference>
<dbReference type="InterPro" id="IPR016169">
    <property type="entry name" value="FAD-bd_PCMH_sub2"/>
</dbReference>
<dbReference type="InterPro" id="IPR006094">
    <property type="entry name" value="Oxid_FAD_bind_N"/>
</dbReference>
<dbReference type="PANTHER" id="PTHR10801">
    <property type="entry name" value="24-DEHYDROCHOLESTEROL REDUCTASE"/>
    <property type="match status" value="1"/>
</dbReference>
<dbReference type="PANTHER" id="PTHR10801:SF0">
    <property type="entry name" value="DELTA(24)-STEROL REDUCTASE"/>
    <property type="match status" value="1"/>
</dbReference>
<dbReference type="Pfam" id="PF01565">
    <property type="entry name" value="FAD_binding_4"/>
    <property type="match status" value="1"/>
</dbReference>
<dbReference type="SUPFAM" id="SSF56176">
    <property type="entry name" value="FAD-binding/transporter-associated domain-like"/>
    <property type="match status" value="1"/>
</dbReference>
<dbReference type="PROSITE" id="PS51387">
    <property type="entry name" value="FAD_PCMH"/>
    <property type="match status" value="1"/>
</dbReference>
<organism>
    <name type="scientific">Arabidopsis thaliana</name>
    <name type="common">Mouse-ear cress</name>
    <dbReference type="NCBI Taxonomy" id="3702"/>
    <lineage>
        <taxon>Eukaryota</taxon>
        <taxon>Viridiplantae</taxon>
        <taxon>Streptophyta</taxon>
        <taxon>Embryophyta</taxon>
        <taxon>Tracheophyta</taxon>
        <taxon>Spermatophyta</taxon>
        <taxon>Magnoliopsida</taxon>
        <taxon>eudicotyledons</taxon>
        <taxon>Gunneridae</taxon>
        <taxon>Pentapetalae</taxon>
        <taxon>rosids</taxon>
        <taxon>malvids</taxon>
        <taxon>Brassicales</taxon>
        <taxon>Brassicaceae</taxon>
        <taxon>Camelineae</taxon>
        <taxon>Arabidopsis</taxon>
    </lineage>
</organism>
<sequence length="561" mass="65394">MSDLQTPLVRPKRKKTWVDYFVKFRWIIVIFIVLPFSATFYFLIYLGDMWSESKSFEKRQKEHDENVKKVIKRLKGRDASKDGLVCTARKPWIAVGMRNVDYKRARHFEVDLGEFRNILEINKEKMTARVEPLVNMGQISRATVPMNLSLAVVAELDDLTVGGLINGYGIEGSSHIYGLFADTVEAYEIVLAGGELVRATRDNEYSDLYYAIPWSQGTLGLLVAAEIRLIKVKEYMRLTYIPVKGDLQALAQGYIDSFAPKDGDKSKIPDFVEGMVYNPTEGVMMVGTYASKEEAKKKGNKINNVGWWFKPWFYQHAQTALKKGQFVEYIPTREYYHRHTRCLYWEGKLILPFGDQFWFRYLLGWLMPPKVSLLKATQGEAIRNYYHDMHVIQDMLVPLYKVGDALEWVHREMEVYPIWLCPHKLFKQPIKGQIYPEPGFEYENRQGDTEDAQMYTDVGVYYAPGCVLRGEEFDGSEAVRRMEKWLIENHGFQPQYAVSELDEKSFWRMFNGELYEECRKKYRAIGTFMSVYYKSKKGRKTEKEVREAEQAHLETAYAEAD</sequence>
<proteinExistence type="evidence at protein level"/>
<comment type="function">
    <text evidence="3 4 6">Plays a critical role in the general process of plant cell elongation. Involved in the synthesis of campesterol, an early precursor of brassinolide. Required for the conversion of 24-methylenecholesterol to campesterol and for the conversion of isofucosterol to sitosterol. Necessary for both the isomerization and reduction of 24-methylenecholesterol. Regulates indirectly phytochrome-mediated light responses through the modulation of brassinosteroid biosynthesis.</text>
</comment>
<comment type="catalytic activity">
    <reaction evidence="3 6">
        <text>lathosterol + NADP(+) = 5alpha-cholesta-7,24-dien-3beta-ol + NADPH + H(+)</text>
        <dbReference type="Rhea" id="RHEA:13685"/>
        <dbReference type="ChEBI" id="CHEBI:15378"/>
        <dbReference type="ChEBI" id="CHEBI:16290"/>
        <dbReference type="ChEBI" id="CHEBI:17168"/>
        <dbReference type="ChEBI" id="CHEBI:57783"/>
        <dbReference type="ChEBI" id="CHEBI:58349"/>
        <dbReference type="EC" id="1.3.1.72"/>
    </reaction>
</comment>
<comment type="subunit">
    <text evidence="5">Interacts with calmodulin.</text>
</comment>
<comment type="interaction">
    <interactant intactId="EBI-16906963">
        <id>Q39085</id>
    </interactant>
    <interactant intactId="EBI-25520805">
        <id>Q9M391</id>
        <label>At3g54130</label>
    </interactant>
    <organismsDiffer>false</organismsDiffer>
    <experiments>3</experiments>
</comment>
<comment type="subcellular location">
    <subcellularLocation>
        <location evidence="6">Microsome membrane</location>
        <topology evidence="6">Single-pass type II membrane protein</topology>
        <orientation evidence="6">Cytoplasmic side</orientation>
    </subcellularLocation>
</comment>
<comment type="disruption phenotype">
    <text evidence="3">Dwarf and reduced fertility.</text>
</comment>
<comment type="similarity">
    <text evidence="7">Belongs to the DIMINUTO family.</text>
</comment>